<proteinExistence type="evidence at protein level"/>
<name>PINK1_TRICA</name>
<keyword id="KW-0002">3D-structure</keyword>
<keyword id="KW-0067">ATP-binding</keyword>
<keyword id="KW-0072">Autophagy</keyword>
<keyword id="KW-0963">Cytoplasm</keyword>
<keyword id="KW-0418">Kinase</keyword>
<keyword id="KW-0460">Magnesium</keyword>
<keyword id="KW-0472">Membrane</keyword>
<keyword id="KW-0479">Metal-binding</keyword>
<keyword id="KW-0496">Mitochondrion</keyword>
<keyword id="KW-0999">Mitochondrion inner membrane</keyword>
<keyword id="KW-1000">Mitochondrion outer membrane</keyword>
<keyword id="KW-0547">Nucleotide-binding</keyword>
<keyword id="KW-0597">Phosphoprotein</keyword>
<keyword id="KW-1185">Reference proteome</keyword>
<keyword id="KW-0723">Serine/threonine-protein kinase</keyword>
<keyword id="KW-0808">Transferase</keyword>
<keyword id="KW-0809">Transit peptide</keyword>
<keyword id="KW-0812">Transmembrane</keyword>
<keyword id="KW-1133">Transmembrane helix</keyword>
<comment type="function">
    <text evidence="1 4 5 6 7 8 9 10 11 12">Acts as a serine/threonine-protein kinase (PubMed:24751536, PubMed:25474007, PubMed:26116755, PubMed:26784449, PubMed:28980524, PubMed:29475881, PubMed:29991771, PubMed:32484300). Exhibits a substrate preference for proline at position P+1 and a general preference at several residues for basic residues such as arginine (PubMed:22645651). Also exhibits moderate preferences for a phosphotyrosine at position P-3 and a tryptophan at P-5 (PubMed:22645651). Critical to mitochondrial homeostasis it mediates several pathways that maintain mitochondrial health and function (By similarity). Protects against mitochondrial dysfunction during cellular stress by phosphorylating mitochondrial proteins such as park and likely Drp1, to coordinate mitochondrial quality control mechanisms that remove and replace dysfunctional mitochondrial components (PubMed:24751536, PubMed:25474007, PubMed:26116755, PubMed:28980524, PubMed:29991771, PubMed:32484300). Depending on the severity of mitochondrial damage and/or dysfunction, activity ranges from preventing apoptosis and stimulating mitochondrial biogenesis to regulating mitochondrial dynamics and eliminating severely damaged mitochondria via mitophagy (By similarity). Appears to be particularly important in maintaining the physiology and function of cells with high energy demands that are undergoing stress or altered metabolic environment, including spermatids, muscle cells and neurons such as the dopaminergic (DA) neurons (By similarity). Mediates the translocation and activation of park at the outer membrane (OMM) of dysfunctional/depolarized mitochondria (PubMed:25474007, PubMed:26116755). At the OMM of damaged mitochondria, phosphorylates pre-existing polyubiquitin chains, the Pink1-phosphorylated polyubiquitin then recruits park from the cytosol to the OMM where park is fully activated by phosphorylation at 'Ser-80' by Pink1 (PubMed:24751536, PubMed:25474007, PubMed:26116755, PubMed:29475881, PubMed:29991771). When cellular stress results in irreversible mitochondrial damage, functions with park to promote the clearance of dysfunctional and/or depolarized mitochondria by selective autophagy (mitophagy) (By similarity). The Pink1-park pathway also promotes fission and/or inhibits fusion of damaged mitochondria, by phosphorylating and thus promoting the park-dependent degradation of proteins involved in mitochondrial fusion/fission such as Marf, Opa1 and fzo (By similarity). This prevents the refusion of unhealthy mitochondria with the mitochondrial network or initiates mitochondrial fragmentation facilitating their later engulfment by autophagosomes (By similarity). Also likely to promote mitochondrial fission independently of park and Atg7-mediated mitophagy, via the phosphorylation and activation of Drp1 (PubMed:32484300). Regulates motility of damaged mitochondria by phosphorylating Miro which likely promotes its park-dependent degradation by the proteasome; in motor neurons, this inhibits mitochondrial intracellular anterograde transport along the axons which probably increases the chance of the mitochondria being eliminated in the soma (By similarity). The Pink1-park pathway is also involved in mitochondrial regeneration processes such as promoting mitochondrial biogenesis, activating localized mitochondrial repair, promoting selective turnover of mitochondrial proteins and initiating the mitochondrial import of endogenous proteins (By similarity). Involved in mitochondrial biogenesis by promoting the park-dependent ubiquitination of transcriptional repressor Paris which leads to its subsequent proteasomal degradation and allows activation of the transcription factor srl (By similarity). Functions with park to promote localized mitochondrial repair by activating the translation of specific nuclear-encoded mitochondrial RNAs (nc-mtRNAs) on the mitochondrial surface, including several key electron transport chain component nc-mtRNAs (By similarity). During oogenesis, phosphorylates and inactivates larp on the membrane of defective mitochondria, thus impairing local translation and mtDNA replication and consequently, reducing transmission of deleterious mtDNA mutations to the mature oocyte (By similarity). Phosphorylates the mitochondrial acyl-CoA dehydrogenase Mcad, and appears to be important for maintaining fatty acid and amino acid metabolism via a mechanism that is independent of it's role in maintaining production of ATP (By similarity).</text>
</comment>
<comment type="catalytic activity">
    <reaction evidence="4 5 6 7 8 9 10 11 12">
        <text>L-seryl-[protein] + ATP = O-phospho-L-seryl-[protein] + ADP + H(+)</text>
        <dbReference type="Rhea" id="RHEA:17989"/>
        <dbReference type="Rhea" id="RHEA-COMP:9863"/>
        <dbReference type="Rhea" id="RHEA-COMP:11604"/>
        <dbReference type="ChEBI" id="CHEBI:15378"/>
        <dbReference type="ChEBI" id="CHEBI:29999"/>
        <dbReference type="ChEBI" id="CHEBI:30616"/>
        <dbReference type="ChEBI" id="CHEBI:83421"/>
        <dbReference type="ChEBI" id="CHEBI:456216"/>
        <dbReference type="EC" id="2.7.11.1"/>
    </reaction>
</comment>
<comment type="catalytic activity">
    <reaction evidence="4 5 6 7 8 9 10 11 12">
        <text>L-threonyl-[protein] + ATP = O-phospho-L-threonyl-[protein] + ADP + H(+)</text>
        <dbReference type="Rhea" id="RHEA:46608"/>
        <dbReference type="Rhea" id="RHEA-COMP:11060"/>
        <dbReference type="Rhea" id="RHEA-COMP:11605"/>
        <dbReference type="ChEBI" id="CHEBI:15378"/>
        <dbReference type="ChEBI" id="CHEBI:30013"/>
        <dbReference type="ChEBI" id="CHEBI:30616"/>
        <dbReference type="ChEBI" id="CHEBI:61977"/>
        <dbReference type="ChEBI" id="CHEBI:456216"/>
        <dbReference type="EC" id="2.7.11.1"/>
    </reaction>
</comment>
<comment type="cofactor">
    <cofactor evidence="4 7 11">
        <name>Mg(2+)</name>
        <dbReference type="ChEBI" id="CHEBI:18420"/>
    </cofactor>
    <text evidence="11">Binds 2 Mg(2+) ions per subunit.</text>
</comment>
<comment type="biophysicochemical properties">
    <kinetics>
        <KM evidence="12">287.5 uM for Drp1 (at 30 degrees Celsius)</KM>
        <KM evidence="12">84.4 uM for ubiquitin (at 30 degrees Celsius)</KM>
        <KM evidence="10">391 uM for ubiquitin (at pH 7.5 and 30 degrees Celsius)</KM>
        <KM evidence="10">36 uM for ubiquitinated rat Prkn (at pH 7.5 and 30 degrees Celsius)</KM>
        <text evidence="10 12">kcat is 4.6 sec(-1) for phosphorylation of Drp1 (at pH 7.5 and 30 degrees Celsius) (PubMed:32484300). kcat is 20.9 sec(-1) for phosphorylation of ubiquitin (at pH 7.5 and 30 degrees Celsius) (PubMed:32484300). kcat is 18 min(-1) for phosphorylation of ubiquitin (at pH 7.5 and 30 degrees Celsius) (PubMed:29475881). kcat is 7.8 min(-1) for phosphorylation of ubiquitinated rat Prkn (at pH 7.5 and 30 degrees Celsius) (PubMed:29475881).</text>
    </kinetics>
</comment>
<comment type="subcellular location">
    <subcellularLocation>
        <location evidence="1">Mitochondrion outer membrane</location>
        <topology evidence="2">Single-pass membrane protein</topology>
    </subcellularLocation>
    <subcellularLocation>
        <location evidence="1">Mitochondrion inner membrane</location>
        <topology evidence="2">Single-pass membrane protein</topology>
    </subcellularLocation>
    <subcellularLocation>
        <location evidence="1">Cytoplasm</location>
        <location evidence="1">Cytosol</location>
    </subcellularLocation>
    <text evidence="1">Localizes mostly in mitochondrion, and the smaller proteolytic processed fragment localizes in the cytosol as well (By similarity). When mitochondria are damaged, defective and/or enriched with deleterious mtDNA mutations, Pink1 import is arrested which induces its accumulation on the outer mitochondrial membrane where it acquires kinase activity (By similarity).</text>
</comment>
<comment type="PTM">
    <text evidence="1">Proteolytically cleaved. In healthy cells, the precursor is continuously imported into mitochondria where it is proteolytically cleaved into its short form by the mitochondrial rhomboid protease rho-7 (TcasGA2_TC013516). The short form is then released into the cytosol where it rapidly undergoes proteasome-dependent degradation. In unhealthy cells, when cellular stress conditions lead to the loss of mitochondrial membrane potential, mitochondrial import is impaired leading to the precursor accumulating on the outer mitochondrial membrane (OMM).</text>
</comment>
<comment type="PTM">
    <text evidence="1 4 5 8 9 10 11">Autophosphorylated on Ser-205, which activates kinase activity and is required for substrate recognition (PubMed:22645651, PubMed:26784449, PubMed:28980524, PubMed:29475881, PubMed:29991771). Loss of mitochondrial membrane potential results in the precursor accumulating on the outer mitochondrial membrane (OMM) where it is activated by autophosphorylation at Ser-205 (By similarity). Autophosphorylation is sufficient and essential for selective recruitment of park to depolarized mitochondria, likely via Pink1-dependent phosphorylation of polyubiquitin chains (PubMed:24751536). Also autophosphorylated at Ser-377, Thr-386 and possibly Thr-530 (PubMed:29991771). Another report found evidence of autophosphorylation at Ser-154, Thr-186, Thr-218, Ser-267 and Thr-530, as well as a number of other minor sites, but determined that phosphorylation at these sites is not required for enzyme activity and may not occur in vivo (PubMed:29475881).</text>
</comment>
<comment type="similarity">
    <text evidence="14">Belongs to the protein kinase superfamily. Ser/Thr protein kinase family.</text>
</comment>
<accession>D6WMX4</accession>
<dbReference type="EC" id="2.7.11.1" evidence="6 7 8 9 10 11 12"/>
<dbReference type="EMBL" id="KQ971343">
    <property type="protein sequence ID" value="EFA03268.1"/>
    <property type="molecule type" value="Genomic_DNA"/>
</dbReference>
<dbReference type="RefSeq" id="XP_968367.1">
    <property type="nucleotide sequence ID" value="XM_963274.5"/>
</dbReference>
<dbReference type="PDB" id="5OAT">
    <property type="method" value="X-ray"/>
    <property type="resolution" value="2.78 A"/>
    <property type="chains" value="A/B/C/D/E/F=150-570"/>
</dbReference>
<dbReference type="PDB" id="5YJ9">
    <property type="method" value="X-ray"/>
    <property type="resolution" value="2.53 A"/>
    <property type="chains" value="D=153-570"/>
</dbReference>
<dbReference type="PDB" id="7MP8">
    <property type="method" value="X-ray"/>
    <property type="resolution" value="3.00 A"/>
    <property type="chains" value="A=121-570"/>
</dbReference>
<dbReference type="PDB" id="7MP9">
    <property type="method" value="X-ray"/>
    <property type="resolution" value="2.80 A"/>
    <property type="chains" value="A=121-570"/>
</dbReference>
<dbReference type="PDB" id="8UCT">
    <property type="method" value="X-ray"/>
    <property type="resolution" value="2.93 A"/>
    <property type="chains" value="A=121-570"/>
</dbReference>
<dbReference type="PDB" id="8UDC">
    <property type="method" value="X-ray"/>
    <property type="resolution" value="3.10 A"/>
    <property type="chains" value="A=121-570"/>
</dbReference>
<dbReference type="PDBsum" id="5OAT"/>
<dbReference type="PDBsum" id="5YJ9"/>
<dbReference type="PDBsum" id="7MP8"/>
<dbReference type="PDBsum" id="7MP9"/>
<dbReference type="PDBsum" id="8UCT"/>
<dbReference type="PDBsum" id="8UDC"/>
<dbReference type="SMR" id="D6WMX4"/>
<dbReference type="FunCoup" id="D6WMX4">
    <property type="interactions" value="216"/>
</dbReference>
<dbReference type="STRING" id="7070.D6WMX4"/>
<dbReference type="ChEMBL" id="CHEMBL4295537"/>
<dbReference type="iPTMnet" id="D6WMX4"/>
<dbReference type="EnsemblMetazoa" id="TC013202_001">
    <property type="protein sequence ID" value="TC013202_001"/>
    <property type="gene ID" value="TC013202"/>
</dbReference>
<dbReference type="GeneID" id="656767"/>
<dbReference type="KEGG" id="tca:656767"/>
<dbReference type="CTD" id="65018"/>
<dbReference type="eggNOG" id="KOG4158">
    <property type="taxonomic scope" value="Eukaryota"/>
</dbReference>
<dbReference type="HOGENOM" id="CLU_022208_0_0_1"/>
<dbReference type="InParanoid" id="D6WMX4"/>
<dbReference type="OMA" id="FGQHARK"/>
<dbReference type="OrthoDB" id="1405469at2759"/>
<dbReference type="PhylomeDB" id="D6WMX4"/>
<dbReference type="Proteomes" id="UP000007266">
    <property type="component" value="Linkage group 5"/>
</dbReference>
<dbReference type="GO" id="GO:0005829">
    <property type="term" value="C:cytosol"/>
    <property type="evidence" value="ECO:0007669"/>
    <property type="project" value="UniProtKB-SubCell"/>
</dbReference>
<dbReference type="GO" id="GO:0005743">
    <property type="term" value="C:mitochondrial inner membrane"/>
    <property type="evidence" value="ECO:0007669"/>
    <property type="project" value="UniProtKB-SubCell"/>
</dbReference>
<dbReference type="GO" id="GO:0005741">
    <property type="term" value="C:mitochondrial outer membrane"/>
    <property type="evidence" value="ECO:0007669"/>
    <property type="project" value="UniProtKB-SubCell"/>
</dbReference>
<dbReference type="GO" id="GO:0005739">
    <property type="term" value="C:mitochondrion"/>
    <property type="evidence" value="ECO:0000318"/>
    <property type="project" value="GO_Central"/>
</dbReference>
<dbReference type="GO" id="GO:0005524">
    <property type="term" value="F:ATP binding"/>
    <property type="evidence" value="ECO:0007669"/>
    <property type="project" value="UniProtKB-KW"/>
</dbReference>
<dbReference type="GO" id="GO:0046872">
    <property type="term" value="F:metal ion binding"/>
    <property type="evidence" value="ECO:0007669"/>
    <property type="project" value="UniProtKB-KW"/>
</dbReference>
<dbReference type="GO" id="GO:0004674">
    <property type="term" value="F:protein serine/threonine kinase activity"/>
    <property type="evidence" value="ECO:0000314"/>
    <property type="project" value="UniProtKB"/>
</dbReference>
<dbReference type="GO" id="GO:0031625">
    <property type="term" value="F:ubiquitin protein ligase binding"/>
    <property type="evidence" value="ECO:0000353"/>
    <property type="project" value="ParkinsonsUK-UCL"/>
</dbReference>
<dbReference type="GO" id="GO:0000422">
    <property type="term" value="P:autophagy of mitochondrion"/>
    <property type="evidence" value="ECO:0000318"/>
    <property type="project" value="GO_Central"/>
</dbReference>
<dbReference type="GO" id="GO:1904544">
    <property type="term" value="P:positive regulation of free ubiquitin chain polymerization"/>
    <property type="evidence" value="ECO:0000315"/>
    <property type="project" value="ParkinsonsUK-UCL"/>
</dbReference>
<dbReference type="GO" id="GO:0090141">
    <property type="term" value="P:positive regulation of mitochondrial fission"/>
    <property type="evidence" value="ECO:0000318"/>
    <property type="project" value="GO_Central"/>
</dbReference>
<dbReference type="GO" id="GO:0031398">
    <property type="term" value="P:positive regulation of protein ubiquitination"/>
    <property type="evidence" value="ECO:0000314"/>
    <property type="project" value="ParkinsonsUK-UCL"/>
</dbReference>
<dbReference type="GO" id="GO:0046777">
    <property type="term" value="P:protein autophosphorylation"/>
    <property type="evidence" value="ECO:0000315"/>
    <property type="project" value="UniProtKB"/>
</dbReference>
<dbReference type="GO" id="GO:0042981">
    <property type="term" value="P:regulation of apoptotic process"/>
    <property type="evidence" value="ECO:0000318"/>
    <property type="project" value="GO_Central"/>
</dbReference>
<dbReference type="FunFam" id="1.10.510.10:FF:001622">
    <property type="entry name" value="Serine/threonine-protein kinase PINK1, mitochondrial"/>
    <property type="match status" value="1"/>
</dbReference>
<dbReference type="Gene3D" id="3.30.200.20">
    <property type="entry name" value="Phosphorylase Kinase, domain 1"/>
    <property type="match status" value="1"/>
</dbReference>
<dbReference type="Gene3D" id="1.10.510.10">
    <property type="entry name" value="Transferase(Phosphotransferase) domain 1"/>
    <property type="match status" value="1"/>
</dbReference>
<dbReference type="InterPro" id="IPR011009">
    <property type="entry name" value="Kinase-like_dom_sf"/>
</dbReference>
<dbReference type="InterPro" id="IPR051511">
    <property type="entry name" value="MitoQC_Scaffold_Kinases"/>
</dbReference>
<dbReference type="InterPro" id="IPR000719">
    <property type="entry name" value="Prot_kinase_dom"/>
</dbReference>
<dbReference type="InterPro" id="IPR008271">
    <property type="entry name" value="Ser/Thr_kinase_AS"/>
</dbReference>
<dbReference type="PANTHER" id="PTHR22972">
    <property type="entry name" value="SERINE/THREONINE PROTEIN KINASE"/>
    <property type="match status" value="1"/>
</dbReference>
<dbReference type="PANTHER" id="PTHR22972:SF7">
    <property type="entry name" value="SERINE_THREONINE-PROTEIN KINASE PINK1, MITOCHONDRIAL"/>
    <property type="match status" value="1"/>
</dbReference>
<dbReference type="Pfam" id="PF00069">
    <property type="entry name" value="Pkinase"/>
    <property type="match status" value="1"/>
</dbReference>
<dbReference type="SMART" id="SM00220">
    <property type="entry name" value="S_TKc"/>
    <property type="match status" value="1"/>
</dbReference>
<dbReference type="SUPFAM" id="SSF56112">
    <property type="entry name" value="Protein kinase-like (PK-like)"/>
    <property type="match status" value="1"/>
</dbReference>
<dbReference type="PROSITE" id="PS50011">
    <property type="entry name" value="PROTEIN_KINASE_DOM"/>
    <property type="match status" value="1"/>
</dbReference>
<dbReference type="PROSITE" id="PS00108">
    <property type="entry name" value="PROTEIN_KINASE_ST"/>
    <property type="match status" value="1"/>
</dbReference>
<gene>
    <name evidence="13" type="primary">Pink1</name>
    <name evidence="15" type="ORF">TcasGA2_TC013202</name>
</gene>
<protein>
    <recommendedName>
        <fullName evidence="13">Serine/threonine-protein kinase Pink1, mitochondrial</fullName>
        <ecNumber evidence="6 7 8 9 10 11 12">2.7.11.1</ecNumber>
    </recommendedName>
    <alternativeName>
        <fullName evidence="13">PTEN-induced putative kinase 1</fullName>
    </alternativeName>
</protein>
<reference evidence="16" key="1">
    <citation type="journal article" date="2008" name="Nature">
        <title>The genome of the model beetle and pest Tribolium castaneum.</title>
        <authorList>
            <consortium name="Tribolium Genome Sequencing Consortium"/>
            <person name="Richards S."/>
            <person name="Gibbs R.A."/>
            <person name="Weinstock G.M."/>
            <person name="Brown S.J."/>
            <person name="Denell R."/>
            <person name="Beeman R.W."/>
            <person name="Gibbs R."/>
            <person name="Beeman R.W."/>
            <person name="Brown S.J."/>
            <person name="Bucher G."/>
            <person name="Friedrich M."/>
            <person name="Grimmelikhuijzen C.J."/>
            <person name="Klingler M."/>
            <person name="Lorenzen M."/>
            <person name="Richards S."/>
            <person name="Roth S."/>
            <person name="Schroder R."/>
            <person name="Tautz D."/>
            <person name="Zdobnov E.M."/>
            <person name="Muzny D."/>
            <person name="Gibbs R.A."/>
            <person name="Weinstock G.M."/>
            <person name="Attaway T."/>
            <person name="Bell S."/>
            <person name="Buhay C.J."/>
            <person name="Chandrabose M.N."/>
            <person name="Chavez D."/>
            <person name="Clerk-Blankenburg K.P."/>
            <person name="Cree A."/>
            <person name="Dao M."/>
            <person name="Davis C."/>
            <person name="Chacko J."/>
            <person name="Dinh H."/>
            <person name="Dugan-Rocha S."/>
            <person name="Fowler G."/>
            <person name="Garner T.T."/>
            <person name="Garnes J."/>
            <person name="Gnirke A."/>
            <person name="Hawes A."/>
            <person name="Hernandez J."/>
            <person name="Hines S."/>
            <person name="Holder M."/>
            <person name="Hume J."/>
            <person name="Jhangiani S.N."/>
            <person name="Joshi V."/>
            <person name="Khan Z.M."/>
            <person name="Jackson L."/>
            <person name="Kovar C."/>
            <person name="Kowis A."/>
            <person name="Lee S."/>
            <person name="Lewis L.R."/>
            <person name="Margolis J."/>
            <person name="Morgan M."/>
            <person name="Nazareth L.V."/>
            <person name="Nguyen N."/>
            <person name="Okwuonu G."/>
            <person name="Parker D."/>
            <person name="Richards S."/>
            <person name="Ruiz S.J."/>
            <person name="Santibanez J."/>
            <person name="Savard J."/>
            <person name="Scherer S.E."/>
            <person name="Schneider B."/>
            <person name="Sodergren E."/>
            <person name="Tautz D."/>
            <person name="Vattahil S."/>
            <person name="Villasana D."/>
            <person name="White C.S."/>
            <person name="Wright R."/>
            <person name="Park Y."/>
            <person name="Beeman R.W."/>
            <person name="Lord J."/>
            <person name="Oppert B."/>
            <person name="Lorenzen M."/>
            <person name="Brown S."/>
            <person name="Wang L."/>
            <person name="Savard J."/>
            <person name="Tautz D."/>
            <person name="Richards S."/>
            <person name="Weinstock G."/>
            <person name="Gibbs R.A."/>
            <person name="Liu Y."/>
            <person name="Worley K."/>
            <person name="Weinstock G."/>
            <person name="Elsik C.G."/>
            <person name="Reese J.T."/>
            <person name="Elhaik E."/>
            <person name="Landan G."/>
            <person name="Graur D."/>
            <person name="Arensburger P."/>
            <person name="Atkinson P."/>
            <person name="Beeman R.W."/>
            <person name="Beidler J."/>
            <person name="Brown S.J."/>
            <person name="Demuth J.P."/>
            <person name="Drury D.W."/>
            <person name="Du Y.Z."/>
            <person name="Fujiwara H."/>
            <person name="Lorenzen M."/>
            <person name="Maselli V."/>
            <person name="Osanai M."/>
            <person name="Park Y."/>
            <person name="Robertson H.M."/>
            <person name="Tu Z."/>
            <person name="Wang J.J."/>
            <person name="Wang S."/>
            <person name="Richards S."/>
            <person name="Song H."/>
            <person name="Zhang L."/>
            <person name="Sodergren E."/>
            <person name="Werner D."/>
            <person name="Stanke M."/>
            <person name="Morgenstern B."/>
            <person name="Solovyev V."/>
            <person name="Kosarev P."/>
            <person name="Brown G."/>
            <person name="Chen H.C."/>
            <person name="Ermolaeva O."/>
            <person name="Hlavina W."/>
            <person name="Kapustin Y."/>
            <person name="Kiryutin B."/>
            <person name="Kitts P."/>
            <person name="Maglott D."/>
            <person name="Pruitt K."/>
            <person name="Sapojnikov V."/>
            <person name="Souvorov A."/>
            <person name="Mackey A.J."/>
            <person name="Waterhouse R.M."/>
            <person name="Wyder S."/>
            <person name="Zdobnov E.M."/>
            <person name="Zdobnov E.M."/>
            <person name="Wyder S."/>
            <person name="Kriventseva E.V."/>
            <person name="Kadowaki T."/>
            <person name="Bork P."/>
            <person name="Aranda M."/>
            <person name="Bao R."/>
            <person name="Beermann A."/>
            <person name="Berns N."/>
            <person name="Bolognesi R."/>
            <person name="Bonneton F."/>
            <person name="Bopp D."/>
            <person name="Brown S.J."/>
            <person name="Bucher G."/>
            <person name="Butts T."/>
            <person name="Chaumot A."/>
            <person name="Denell R.E."/>
            <person name="Ferrier D.E."/>
            <person name="Friedrich M."/>
            <person name="Gordon C.M."/>
            <person name="Jindra M."/>
            <person name="Klingler M."/>
            <person name="Lan Q."/>
            <person name="Lattorff H.M."/>
            <person name="Laudet V."/>
            <person name="von Levetsow C."/>
            <person name="Liu Z."/>
            <person name="Lutz R."/>
            <person name="Lynch J.A."/>
            <person name="da Fonseca R.N."/>
            <person name="Posnien N."/>
            <person name="Reuter R."/>
            <person name="Roth S."/>
            <person name="Savard J."/>
            <person name="Schinko J.B."/>
            <person name="Schmitt C."/>
            <person name="Schoppmeier M."/>
            <person name="Schroder R."/>
            <person name="Shippy T.D."/>
            <person name="Simonnet F."/>
            <person name="Marques-Souza H."/>
            <person name="Tautz D."/>
            <person name="Tomoyasu Y."/>
            <person name="Trauner J."/>
            <person name="Van der Zee M."/>
            <person name="Vervoort M."/>
            <person name="Wittkopp N."/>
            <person name="Wimmer E.A."/>
            <person name="Yang X."/>
            <person name="Jones A.K."/>
            <person name="Sattelle D.B."/>
            <person name="Ebert P.R."/>
            <person name="Nelson D."/>
            <person name="Scott J.G."/>
            <person name="Beeman R.W."/>
            <person name="Muthukrishnan S."/>
            <person name="Kramer K.J."/>
            <person name="Arakane Y."/>
            <person name="Beeman R.W."/>
            <person name="Zhu Q."/>
            <person name="Hogenkamp D."/>
            <person name="Dixit R."/>
            <person name="Oppert B."/>
            <person name="Jiang H."/>
            <person name="Zou Z."/>
            <person name="Marshall J."/>
            <person name="Elpidina E."/>
            <person name="Vinokurov K."/>
            <person name="Oppert C."/>
            <person name="Zou Z."/>
            <person name="Evans J."/>
            <person name="Lu Z."/>
            <person name="Zhao P."/>
            <person name="Sumathipala N."/>
            <person name="Altincicek B."/>
            <person name="Vilcinskas A."/>
            <person name="Williams M."/>
            <person name="Hultmark D."/>
            <person name="Hetru C."/>
            <person name="Jiang H."/>
            <person name="Grimmelikhuijzen C.J."/>
            <person name="Hauser F."/>
            <person name="Cazzamali G."/>
            <person name="Williamson M."/>
            <person name="Park Y."/>
            <person name="Li B."/>
            <person name="Tanaka Y."/>
            <person name="Predel R."/>
            <person name="Neupert S."/>
            <person name="Schachtner J."/>
            <person name="Verleyen P."/>
            <person name="Raible F."/>
            <person name="Bork P."/>
            <person name="Friedrich M."/>
            <person name="Walden K.K."/>
            <person name="Robertson H.M."/>
            <person name="Angeli S."/>
            <person name="Foret S."/>
            <person name="Bucher G."/>
            <person name="Schuetz S."/>
            <person name="Maleszka R."/>
            <person name="Wimmer E.A."/>
            <person name="Beeman R.W."/>
            <person name="Lorenzen M."/>
            <person name="Tomoyasu Y."/>
            <person name="Miller S.C."/>
            <person name="Grossmann D."/>
            <person name="Bucher G."/>
        </authorList>
    </citation>
    <scope>NUCLEOTIDE SEQUENCE [LARGE SCALE GENOMIC DNA]</scope>
    <source>
        <strain evidence="16">Georgia GA2</strain>
    </source>
</reference>
<reference evidence="16" key="2">
    <citation type="journal article" date="2010" name="Nucleic Acids Res.">
        <title>BeetleBase in 2010: revisions to provide comprehensive genomic information for Tribolium castaneum.</title>
        <authorList>
            <person name="Kim H.S."/>
            <person name="Murphy T."/>
            <person name="Xia J."/>
            <person name="Caragea D."/>
            <person name="Park Y."/>
            <person name="Beeman R.W."/>
            <person name="Lorenzen M.D."/>
            <person name="Butcher S."/>
            <person name="Manak J.R."/>
            <person name="Brown S.J."/>
        </authorList>
    </citation>
    <scope>GENOME REANNOTATION</scope>
    <source>
        <strain evidence="16">Georgia GA2</strain>
    </source>
</reference>
<reference evidence="14" key="3">
    <citation type="journal article" date="2011" name="Open Biol.">
        <title>Discovery of catalytically active orthologues of the Parkinson's disease kinase PINK1: analysis of substrate specificity and impact of mutations.</title>
        <authorList>
            <person name="Woodroof H.I."/>
            <person name="Pogson J.H."/>
            <person name="Begley M."/>
            <person name="Cantley L.C."/>
            <person name="Deak M."/>
            <person name="Campbell D.G."/>
            <person name="van Aalten D.M."/>
            <person name="Whitworth A.J."/>
            <person name="Alessi D.R."/>
            <person name="Muqit M.M."/>
        </authorList>
    </citation>
    <scope>FUNCTION</scope>
    <scope>CATALYTIC ACTIVITY</scope>
    <scope>COFACTOR</scope>
    <scope>PHOSPHORYLATION AT SER-205</scope>
    <scope>MUTAGENESIS OF CYS-130; ALA-194; SER-205; SER-207; GLU-217; HIS-247; GLU-285; LEU-322; LEU-344; ASP-359; GLY-361; CYS-363; GLY-384; PRO-391; GLU-392; GLY-415 AND LEU-462</scope>
</reference>
<reference evidence="14" key="4">
    <citation type="journal article" date="2014" name="J. Cell Biol.">
        <title>PINK1 phosphorylates ubiquitin to activate Parkin E3 ubiquitin ligase activity.</title>
        <authorList>
            <person name="Kane L.A."/>
            <person name="Lazarou M."/>
            <person name="Fogel A.I."/>
            <person name="Li Y."/>
            <person name="Yamano K."/>
            <person name="Sarraf S.A."/>
            <person name="Banerjee S."/>
            <person name="Youle R.J."/>
        </authorList>
    </citation>
    <scope>FUNCTION</scope>
    <scope>CATALYTIC ACTIVITY</scope>
    <scope>MUTAGENESIS OF ASP-359</scope>
</reference>
<reference evidence="14" key="5">
    <citation type="journal article" date="2014" name="PLoS Genet.">
        <title>Phosphorylation of mitochondrial polyubiquitin by PINK1 promotes Parkin mitochondrial tethering.</title>
        <authorList>
            <person name="Shiba-Fukushima K."/>
            <person name="Arano T."/>
            <person name="Matsumoto G."/>
            <person name="Inoshita T."/>
            <person name="Yoshida S."/>
            <person name="Ishihama Y."/>
            <person name="Ryu K.Y."/>
            <person name="Nukina N."/>
            <person name="Hattori N."/>
            <person name="Imai Y."/>
        </authorList>
    </citation>
    <scope>FUNCTION</scope>
    <scope>CATALYTIC ACTIVITY</scope>
    <scope>MUTAGENESIS OF ASP-359</scope>
</reference>
<reference evidence="14" key="6">
    <citation type="journal article" date="2015" name="EMBO Rep.">
        <title>Binding to serine 65-phosphorylated ubiquitin primes Parkin for optimal PINK1-dependent phosphorylation and activation.</title>
        <authorList>
            <person name="Kazlauskaite A."/>
            <person name="Martinez-Torres R.J."/>
            <person name="Wilkie S."/>
            <person name="Kumar A."/>
            <person name="Peltier J."/>
            <person name="Gonzalez A."/>
            <person name="Johnson C."/>
            <person name="Zhang J."/>
            <person name="Hope A.G."/>
            <person name="Peggie M."/>
            <person name="Trost M."/>
            <person name="van Aalten D.M."/>
            <person name="Alessi D.R."/>
            <person name="Prescott A.R."/>
            <person name="Knebel A."/>
            <person name="Walden H."/>
            <person name="Muqit M.M."/>
        </authorList>
    </citation>
    <scope>FUNCTION</scope>
    <scope>CATALYTIC ACTIVITY</scope>
    <scope>COFACTOR</scope>
    <scope>MUTAGENESIS OF ASP-359</scope>
</reference>
<reference evidence="14" key="7">
    <citation type="journal article" date="2016" name="PLoS ONE">
        <title>In Vitro Comparison of the Activity Requirements and Substrate Specificity of Human and Triboleum castaneum PINK1 Orthologues.</title>
        <authorList>
            <person name="Aerts L."/>
            <person name="Craessaerts K."/>
            <person name="De Strooper B."/>
            <person name="Morais V.A."/>
        </authorList>
    </citation>
    <scope>FUNCTION</scope>
    <scope>CATALYTIC ACTIVITY</scope>
    <scope>PHOSPHORYLATION</scope>
    <scope>MUTAGENESIS OF ASP-359</scope>
</reference>
<reference evidence="14" key="8">
    <citation type="journal article" date="2018" name="EMBO Rep.">
        <title>PINK1 autophosphorylation is required for ubiquitin recognition.</title>
        <authorList>
            <person name="Rasool S."/>
            <person name="Soya N."/>
            <person name="Truong L."/>
            <person name="Croteau N."/>
            <person name="Lukacs G.L."/>
            <person name="Trempe J.F."/>
        </authorList>
    </citation>
    <scope>FUNCTION</scope>
    <scope>CATALYTIC ACTIVITY</scope>
    <scope>BIOPHYSICOCHEMICAL PROPERTIES</scope>
    <scope>PHOSPHORYLATION AT SER-205</scope>
    <scope>MUTAGENESIS OF LEU-196; SER-205; GLU-217; GLY-285; ASP-337; ASP-359 AND CYS-363</scope>
</reference>
<reference evidence="14" key="9">
    <citation type="journal article" date="2020" name="EMBO Rep.">
        <title>PINK1 phosphorylates Drp1S616 to regulate mitophagy-independent mitochondrial dynamics.</title>
        <authorList>
            <person name="Han H."/>
            <person name="Tan J."/>
            <person name="Wang R."/>
            <person name="Wan H."/>
            <person name="He Y."/>
            <person name="Yan X."/>
            <person name="Guo J."/>
            <person name="Gao Q."/>
            <person name="Li J."/>
            <person name="Shang S."/>
            <person name="Chen F."/>
            <person name="Tian R."/>
            <person name="Liu W."/>
            <person name="Liao L."/>
            <person name="Tang B."/>
            <person name="Zhang Z."/>
        </authorList>
    </citation>
    <scope>FUNCTION</scope>
    <scope>CATALYTIC ACTIVITY</scope>
    <scope>BIOPHYSICOCHEMICAL PROPERTIES</scope>
</reference>
<reference evidence="17" key="10">
    <citation type="journal article" date="2017" name="Elife">
        <title>Structure of PINK1 and mechanisms of Parkinson's disease-associated mutations.</title>
        <authorList>
            <person name="Kumar A."/>
            <person name="Tamjar J."/>
            <person name="Waddell A.D."/>
            <person name="Woodroof H.I."/>
            <person name="Raimi O.G."/>
            <person name="Shaw A.M."/>
            <person name="Peggie M."/>
            <person name="Muqit M.M."/>
            <person name="van Aalten D.M."/>
        </authorList>
    </citation>
    <scope>X-RAY CRYSTALLOGRAPHY (2.78 ANGSTROMS) OF 150-570</scope>
    <scope>FUNCTION</scope>
    <scope>CATALYTIC ACTIVITY</scope>
    <scope>PHOSPHORYLATION AT SER-205</scope>
    <scope>MUTAGENESIS OF ALA-194; LYS-196; ARG-216; GLU-217; 222-ARG--LYS-242; 231-ASN--LYS-242; ARG-240; 243-HIS--PHE-253; 261-ILE--LYS-270; ASP-359; LEU-371; TYR-375; ASP-381 AND LYS-382</scope>
</reference>
<reference evidence="18" key="11">
    <citation type="journal article" date="2018" name="Sci. Rep.">
        <title>Structural insights into ubiquitin phosphorylation by PINK1.</title>
        <authorList>
            <person name="Okatsu K."/>
            <person name="Sato Y."/>
            <person name="Yamano K."/>
            <person name="Matsuda N."/>
            <person name="Negishi L."/>
            <person name="Takahashi A."/>
            <person name="Yamagata A."/>
            <person name="Goto-Ito S."/>
            <person name="Mishima M."/>
            <person name="Ito Y."/>
            <person name="Oka T."/>
            <person name="Tanaka K."/>
            <person name="Fukai S."/>
        </authorList>
    </citation>
    <scope>X-RAY CRYSTALLOGRAPHY (2.53 ANGSTROMS) OF 153-570 IN COMPLEX WITH ATP ANALOG</scope>
    <scope>FUNCTION</scope>
    <scope>CATALYTIC ACTIVITY</scope>
    <scope>COFACTOR</scope>
    <scope>PHOSPHORYLATION AT SER-205; SER-377; THR-386 AND THR-530</scope>
    <scope>MAGNESIUM-BINDING</scope>
    <scope>ACTIVE SITE</scope>
    <scope>MUTAGENESIS OF ILE-168; VAL-176; ALA-194; LYS-196; SER-205; GLU-209; ILE-210; LYS-212; GLU-217; VAL-251; MET-294; ASP-337; ASP-341; ASN-342; LEU-344; ASP-359; CYS-362; THR-368; SER-372; THR-376; SER-377; ASP-381; ASN-385; THR-386; GLU-420; ASN-426; TYR-429 AND THR-530</scope>
</reference>
<sequence>MSVRAVGSRLFKHGRSLIQQFCKRDLNTTIGDKINAVSQATAAPSSLPKTQIPKNFALRNVGVQLGLQARRILIDNVLNRVTNSLSAELRKKATRRILFGDSAPFFALVGVSIASGTGILTKEEELEGVCWEIREAISKIKWQYYDIDESRFESNPITLNDLSLGKPIAKGTNGVVYSAKVKDDETDDNKYPFALKMMFNYDIQSNSMEILKAMYRETVPARMYYSNHDLNNWEIELANRRKHLPPHPNIVAIFSVFTDLIQELEGSKDLYPAALPPRLHPEGEGRNMSLFLLMKRYDCNLQSFLSTAPSTRTSLLLLAQLLEGVAHMTAHGIAHRDLKSDNLLLDTSEPESPILVISDFGCCLADKTNGLSLPYTSYEMDKGGNTALMAPEIICQKPGTFSVLNYSKADLWAVGAIAYEIFNCHNPFYGPSRLKNFNYKEGDLPKLPDEVPTVIQALVANLLKRNPNKRLDPEVAANVCQLFLWAPSTWLKPGLKVPTSGEILQWLLSLTTKVLCEGKINNKSFGEKFTRNWRRTYPEYLLISSFLCRAKLANVRNALHWIQENLPELD</sequence>
<evidence type="ECO:0000250" key="1">
    <source>
        <dbReference type="UniProtKB" id="Q0KHV6"/>
    </source>
</evidence>
<evidence type="ECO:0000255" key="2"/>
<evidence type="ECO:0000255" key="3">
    <source>
        <dbReference type="PROSITE-ProRule" id="PRU00159"/>
    </source>
</evidence>
<evidence type="ECO:0000269" key="4">
    <source>
    </source>
</evidence>
<evidence type="ECO:0000269" key="5">
    <source>
    </source>
</evidence>
<evidence type="ECO:0000269" key="6">
    <source>
    </source>
</evidence>
<evidence type="ECO:0000269" key="7">
    <source>
    </source>
</evidence>
<evidence type="ECO:0000269" key="8">
    <source>
    </source>
</evidence>
<evidence type="ECO:0000269" key="9">
    <source>
    </source>
</evidence>
<evidence type="ECO:0000269" key="10">
    <source>
    </source>
</evidence>
<evidence type="ECO:0000269" key="11">
    <source>
    </source>
</evidence>
<evidence type="ECO:0000269" key="12">
    <source>
    </source>
</evidence>
<evidence type="ECO:0000303" key="13">
    <source>
    </source>
</evidence>
<evidence type="ECO:0000305" key="14"/>
<evidence type="ECO:0000312" key="15">
    <source>
        <dbReference type="EMBL" id="EFA03268.1"/>
    </source>
</evidence>
<evidence type="ECO:0000312" key="16">
    <source>
        <dbReference type="Proteomes" id="UP000007266"/>
    </source>
</evidence>
<evidence type="ECO:0007744" key="17">
    <source>
        <dbReference type="PDB" id="5OAT"/>
    </source>
</evidence>
<evidence type="ECO:0007744" key="18">
    <source>
        <dbReference type="PDB" id="5YJ9"/>
    </source>
</evidence>
<evidence type="ECO:0007829" key="19">
    <source>
        <dbReference type="PDB" id="5OAT"/>
    </source>
</evidence>
<evidence type="ECO:0007829" key="20">
    <source>
        <dbReference type="PDB" id="5YJ9"/>
    </source>
</evidence>
<evidence type="ECO:0007829" key="21">
    <source>
        <dbReference type="PDB" id="7MP8"/>
    </source>
</evidence>
<evidence type="ECO:0007829" key="22">
    <source>
        <dbReference type="PDB" id="7MP9"/>
    </source>
</evidence>
<evidence type="ECO:0007829" key="23">
    <source>
        <dbReference type="PDB" id="8UCT"/>
    </source>
</evidence>
<evidence type="ECO:0007829" key="24">
    <source>
        <dbReference type="PDB" id="8UDC"/>
    </source>
</evidence>
<feature type="transit peptide" description="Mitochondrion" evidence="2">
    <location>
        <begin position="1"/>
        <end position="5"/>
    </location>
</feature>
<feature type="chain" id="PRO_0000454926" description="Serine/threonine-protein kinase Pink1, mitochondrial" evidence="2">
    <location>
        <begin position="6"/>
        <end position="570"/>
    </location>
</feature>
<feature type="topological domain" description="Mitochondrial intermembrane" evidence="14">
    <location>
        <begin position="6"/>
        <end position="96"/>
    </location>
</feature>
<feature type="transmembrane region" description="Helical" evidence="2">
    <location>
        <begin position="97"/>
        <end position="120"/>
    </location>
</feature>
<feature type="topological domain" description="Cytoplasmic" evidence="14">
    <location>
        <begin position="121"/>
        <end position="570"/>
    </location>
</feature>
<feature type="domain" description="Protein kinase" evidence="3">
    <location>
        <begin position="162"/>
        <end position="484"/>
    </location>
</feature>
<feature type="active site" description="Proton acceptor" evidence="3 11">
    <location>
        <position position="337"/>
    </location>
</feature>
<feature type="binding site" evidence="3 11 18">
    <location>
        <position position="196"/>
    </location>
    <ligand>
        <name>ATP</name>
        <dbReference type="ChEBI" id="CHEBI:30616"/>
    </ligand>
</feature>
<feature type="binding site" evidence="11 18">
    <location>
        <position position="217"/>
    </location>
    <ligand>
        <name>Mg(2+)</name>
        <dbReference type="ChEBI" id="CHEBI:18420"/>
        <label>1</label>
    </ligand>
</feature>
<feature type="binding site" evidence="11 18">
    <location>
        <position position="295"/>
    </location>
    <ligand>
        <name>ATP</name>
        <dbReference type="ChEBI" id="CHEBI:30616"/>
    </ligand>
</feature>
<feature type="binding site" evidence="11 18">
    <location>
        <position position="297"/>
    </location>
    <ligand>
        <name>ATP</name>
        <dbReference type="ChEBI" id="CHEBI:30616"/>
    </ligand>
</feature>
<feature type="binding site" evidence="11 18">
    <location>
        <position position="300"/>
    </location>
    <ligand>
        <name>ATP</name>
        <dbReference type="ChEBI" id="CHEBI:30616"/>
    </ligand>
</feature>
<feature type="binding site" evidence="11 18">
    <location>
        <position position="341"/>
    </location>
    <ligand>
        <name>ATP</name>
        <dbReference type="ChEBI" id="CHEBI:30616"/>
    </ligand>
</feature>
<feature type="binding site" evidence="11 18">
    <location>
        <position position="342"/>
    </location>
    <ligand>
        <name>Mg(2+)</name>
        <dbReference type="ChEBI" id="CHEBI:18420"/>
        <label>2</label>
    </ligand>
</feature>
<feature type="binding site" evidence="11 18">
    <location>
        <position position="359"/>
    </location>
    <ligand>
        <name>ATP</name>
        <dbReference type="ChEBI" id="CHEBI:30616"/>
    </ligand>
</feature>
<feature type="binding site" evidence="9 11 17 18">
    <location>
        <position position="359"/>
    </location>
    <ligand>
        <name>Mg(2+)</name>
        <dbReference type="ChEBI" id="CHEBI:18420"/>
        <label>1</label>
    </ligand>
</feature>
<feature type="binding site" evidence="11 18">
    <location>
        <position position="359"/>
    </location>
    <ligand>
        <name>Mg(2+)</name>
        <dbReference type="ChEBI" id="CHEBI:18420"/>
        <label>2</label>
    </ligand>
</feature>
<feature type="site" description="Important for interaction with substrates Prkn and ubiquitin" evidence="10">
    <location>
        <position position="44"/>
    </location>
</feature>
<feature type="site" description="Important for interaction with substrates Prkn and ubiquitin" evidence="10">
    <location>
        <position position="48"/>
    </location>
</feature>
<feature type="site" description="Important for interaction with substrates Prkn and ubiquitin" evidence="10">
    <location>
        <position position="68"/>
    </location>
</feature>
<feature type="site" description="Important for interaction with substrates Prkn and ubiquitin" evidence="10">
    <location>
        <position position="72"/>
    </location>
</feature>
<feature type="modified residue" description="Phosphoserine; by autocatalysis" evidence="4 9 10 11">
    <location>
        <position position="205"/>
    </location>
</feature>
<feature type="modified residue" description="Phosphoserine; by autocatalysis" evidence="11">
    <location>
        <position position="377"/>
    </location>
</feature>
<feature type="modified residue" description="Phosphothreonine; by autocatalysis" evidence="11">
    <location>
        <position position="386"/>
    </location>
</feature>
<feature type="modified residue" description="Phosphothreonine" evidence="11">
    <location>
        <position position="530"/>
    </location>
</feature>
<feature type="mutagenesis site" description="Moderately reduces enzyme activity." evidence="4">
    <original>C</original>
    <variation>G</variation>
    <location>
        <position position="130"/>
    </location>
</feature>
<feature type="mutagenesis site" description="Abolishes phosphorylation of ubiquitin." evidence="11">
    <original>I</original>
    <variation>N</variation>
    <location>
        <position position="168"/>
    </location>
</feature>
<feature type="mutagenesis site" description="Abolishes phosphorylation of ubiquitin." evidence="11">
    <original>V</original>
    <variation>N</variation>
    <location>
        <position position="176"/>
    </location>
</feature>
<feature type="mutagenesis site" description="Almost complete loss of enzyme activity." evidence="4 9">
    <original>A</original>
    <variation>D</variation>
    <location>
        <position position="194"/>
    </location>
</feature>
<feature type="mutagenesis site" description="Abolishes phosphorylation of ubiquitin." evidence="11">
    <original>A</original>
    <variation>N</variation>
    <location>
        <position position="194"/>
    </location>
</feature>
<feature type="mutagenesis site" description="Almost complete loss of enzyme activity, but still undergoes autophosphorylation at Ser-205 and is able to bind rat Prkn. Abolishes phosphorylation of polyubiquitin chains at Ser-65; when associated with A-337 and A-359." evidence="6 9 10 11">
    <original>K</original>
    <variation>A</variation>
    <location>
        <position position="196"/>
    </location>
</feature>
<feature type="mutagenesis site" description="Strongly reduces enzyme activity. Abolishes phosphorylation of rat ubiquitin and strongly reduced phosphorylation of rat Prkn." evidence="4 10">
    <original>S</original>
    <variation>A</variation>
    <location>
        <position position="205"/>
    </location>
</feature>
<feature type="mutagenesis site" description="Phosphomimetic mutant which retains some residual ubiquitin phosphorylation activity; when associated with D-377, E-386 and E-530." evidence="11">
    <original>S</original>
    <variation>D</variation>
    <location>
        <position position="205"/>
    </location>
</feature>
<feature type="mutagenesis site" description="Strongly reduces enzyme activity. Abolishes phosphorylation of rat ubiquitin and strongly reduced phosphorylation of rat Prkn." evidence="10">
    <original>S</original>
    <variation>N</variation>
    <location>
        <position position="205"/>
    </location>
</feature>
<feature type="mutagenesis site" description="No effect on enzyme activity." evidence="4">
    <original>S</original>
    <variation>A</variation>
    <location>
        <position position="207"/>
    </location>
</feature>
<feature type="mutagenesis site" description="Drastically reduces phosphorylation of ubiquitin." evidence="11">
    <original>E</original>
    <variation>R</variation>
    <location>
        <position position="209"/>
    </location>
</feature>
<feature type="mutagenesis site" description="Drastically reduces phosphorylation of ubiquitin." evidence="11">
    <original>I</original>
    <variation>N</variation>
    <location>
        <position position="210"/>
    </location>
</feature>
<feature type="mutagenesis site" description="Slight reduction in phosphorylation of ubiquitin." evidence="9">
    <original>K</original>
    <variation>A</variation>
    <location>
        <position position="212"/>
    </location>
</feature>
<feature type="mutagenesis site" description="Reduced phosphorylation of ubiquitin." evidence="9">
    <original>R</original>
    <variation>A</variation>
    <location>
        <position position="216"/>
    </location>
</feature>
<feature type="mutagenesis site" description="Abolishes phosphorylation of ubiquitin." evidence="11">
    <original>E</original>
    <variation>A</variation>
    <location>
        <position position="217"/>
    </location>
</feature>
<feature type="mutagenesis site" description="Abolishes enzyme activity." evidence="4 9 10 11">
    <original>E</original>
    <variation>K</variation>
    <location>
        <position position="217"/>
    </location>
</feature>
<feature type="mutagenesis site" description="No effect on enzyme activity." evidence="9">
    <location>
        <begin position="222"/>
        <end position="242"/>
    </location>
</feature>
<feature type="mutagenesis site" description="No effect on enzyme activity." evidence="9">
    <location>
        <begin position="231"/>
        <end position="242"/>
    </location>
</feature>
<feature type="mutagenesis site" description="Reduced phosphorylation of ubiquitin." evidence="9">
    <original>R</original>
    <variation>A</variation>
    <location>
        <position position="240"/>
    </location>
</feature>
<feature type="mutagenesis site" description="Abolishes enzyme activity." evidence="9">
    <location>
        <begin position="243"/>
        <end position="253"/>
    </location>
</feature>
<feature type="mutagenesis site" description="Strongly reduces enzyme activity." evidence="4">
    <original>H</original>
    <variation>Q</variation>
    <location>
        <position position="247"/>
    </location>
</feature>
<feature type="mutagenesis site" description="Reduced phosphorylation of ubiquitin." evidence="11">
    <original>V</original>
    <variation>N</variation>
    <location>
        <position position="251"/>
    </location>
</feature>
<feature type="mutagenesis site" description="Abolishes phosphorylation of ubiquitin." evidence="11">
    <original>V</original>
    <variation>R</variation>
    <location>
        <position position="251"/>
    </location>
</feature>
<feature type="mutagenesis site" description="Strongly reduces enzyme activity. Unable to phosphorylate ubiquitin and park, but retains its autophosphorylation activity." evidence="9">
    <location>
        <begin position="261"/>
        <end position="270"/>
    </location>
</feature>
<feature type="mutagenesis site" description="Strongly reduces enzyme activity." evidence="4 10">
    <original>G</original>
    <variation>D</variation>
    <location>
        <position position="285"/>
    </location>
</feature>
<feature type="mutagenesis site" description="Decreases phosphorylation of ubiquitin." evidence="11">
    <original>M</original>
    <variation>A</variation>
    <variation>L</variation>
    <location>
        <position position="294"/>
    </location>
</feature>
<feature type="mutagenesis site" description="Abolishes phosphorylation of ubiquitin." evidence="11">
    <original>M</original>
    <variation>N</variation>
    <location>
        <position position="294"/>
    </location>
</feature>
<feature type="mutagenesis site" description="Almost complete loss of enzyme activity." evidence="4">
    <original>L</original>
    <variation>P</variation>
    <location>
        <position position="322"/>
    </location>
</feature>
<feature type="mutagenesis site" description="Abolishes enzyme activity, loss of autophosphorylation and phosphorylation of ubiquitin. Abolishes phosphorylation of polyubiquitin chains at Ser-65; when associated with A-196 and A-359." evidence="11">
    <original>D</original>
    <variation>A</variation>
    <location>
        <position position="337"/>
    </location>
</feature>
<feature type="mutagenesis site" description="Abolishes phosphorylation of ubiquitin." evidence="11">
    <original>D</original>
    <variation>H</variation>
    <location>
        <position position="337"/>
    </location>
</feature>
<feature type="mutagenesis site" description="Abolishes enzyme activity. Able to undergo autophosphorylation and bind to rat Prkn." evidence="10">
    <original>D</original>
    <variation>N</variation>
    <location>
        <position position="337"/>
    </location>
</feature>
<feature type="mutagenesis site" description="Abolishes phosphorylation of ubiquitin." evidence="11">
    <original>D</original>
    <variation>A</variation>
    <location>
        <position position="341"/>
    </location>
</feature>
<feature type="mutagenesis site" description="Abolishes phosphorylation of ubiquitin." evidence="11">
    <original>N</original>
    <variation>A</variation>
    <location>
        <position position="342"/>
    </location>
</feature>
<feature type="mutagenesis site" description="Abolishes phosphorylation of ubiquitin." evidence="11">
    <original>N</original>
    <variation>S</variation>
    <location>
        <position position="342"/>
    </location>
</feature>
<feature type="mutagenesis site" description="No effect on phosphorylation of ubiquitin." evidence="11">
    <original>L</original>
    <variation>N</variation>
    <location>
        <position position="344"/>
    </location>
</feature>
<feature type="mutagenesis site" description="Almost complete loss of enzyme activity." evidence="4">
    <original>L</original>
    <variation>P</variation>
    <location>
        <position position="344"/>
    </location>
</feature>
<feature type="mutagenesis site" description="Abolishes phosphorylation of ubiquitin." evidence="11">
    <original>L</original>
    <variation>R</variation>
    <location>
        <position position="344"/>
    </location>
</feature>
<feature type="mutagenesis site" description="Abolishes enzyme activity. No effect on autophosphorylation activity. However, another report found that it significantly reduced autophosphorylation. Abolishes phosphorylation of polyubiquitin chains at Ser-65; when associated with A-196 and A-337." evidence="4 5 6 7 8 9 11">
    <original>D</original>
    <variation>A</variation>
    <location>
        <position position="359"/>
    </location>
</feature>
<feature type="mutagenesis site" description="Abolishes enzyme activity." evidence="10">
    <original>D</original>
    <variation>N</variation>
    <location>
        <position position="359"/>
    </location>
</feature>
<feature type="mutagenesis site" description="Almost complete loss of enzyme activity." evidence="4">
    <original>G</original>
    <variation>A</variation>
    <location>
        <position position="361"/>
    </location>
</feature>
<feature type="mutagenesis site" description="Slight reduction in phosphorylation of ubiquitin." evidence="11">
    <original>C</original>
    <variation>A</variation>
    <location>
        <position position="362"/>
    </location>
</feature>
<feature type="mutagenesis site" description="Abolishes enzyme activity." evidence="4">
    <original>C</original>
    <variation>R</variation>
    <location>
        <position position="363"/>
    </location>
</feature>
<feature type="mutagenesis site" description="No effect on phosphorylation of rat ubiquitin." evidence="10">
    <original>C</original>
    <variation>S</variation>
    <location>
        <position position="363"/>
    </location>
</feature>
<feature type="mutagenesis site" description="No effect on autophosphorylation levels; when associated with A-372." evidence="11">
    <original>T</original>
    <variation>A</variation>
    <location>
        <position position="368"/>
    </location>
</feature>
<feature type="mutagenesis site" description="Almost complete loss of enzyme activity." evidence="9">
    <original>L</original>
    <variation>A</variation>
    <location>
        <position position="371"/>
    </location>
</feature>
<feature type="mutagenesis site" description="No effect on autophosphorylation levels; when associated with A-368." evidence="11">
    <original>S</original>
    <variation>A</variation>
    <location>
        <position position="372"/>
    </location>
</feature>
<feature type="mutagenesis site" description="Almost complete loss of enzyme activity." evidence="9">
    <original>Y</original>
    <variation>A</variation>
    <location>
        <position position="375"/>
    </location>
</feature>
<feature type="mutagenesis site" description="No effect on autophosphorylation." evidence="11">
    <original>T</original>
    <variation>A</variation>
    <location>
        <position position="376"/>
    </location>
</feature>
<feature type="mutagenesis site" description="Phosphomimetic mutant which retains some residual ubiquitin phosphorylation activity; when associated with D-205, E-386 and E-530." evidence="11">
    <original>S</original>
    <variation>D</variation>
    <location>
        <position position="377"/>
    </location>
</feature>
<feature type="mutagenesis site" description="Reduced phosphorylation of ubiquitin." evidence="9">
    <original>D</original>
    <variation>A</variation>
    <location>
        <position position="381"/>
    </location>
</feature>
<feature type="mutagenesis site" description="Drastically reduces phosphorylation of ubiquitin." evidence="11">
    <original>D</original>
    <variation>R</variation>
    <location>
        <position position="381"/>
    </location>
</feature>
<feature type="mutagenesis site" description="Almost complete loss of enzyme activity." evidence="9">
    <original>K</original>
    <variation>A</variation>
    <location>
        <position position="382"/>
    </location>
</feature>
<feature type="mutagenesis site" description="Almost complete loss of enzyme activity." evidence="4">
    <original>G</original>
    <variation>V</variation>
    <location>
        <position position="384"/>
    </location>
</feature>
<feature type="mutagenesis site" description="Drastically reduces phosphorylation of ubiquitin." evidence="11">
    <original>N</original>
    <variation>A</variation>
    <location>
        <position position="385"/>
    </location>
</feature>
<feature type="mutagenesis site" description="Decreased autophosphorylation levels." evidence="11">
    <original>T</original>
    <variation>A</variation>
    <location>
        <position position="386"/>
    </location>
</feature>
<feature type="mutagenesis site" description="Phosphomimetic mutant which retains some residual ubiquitin phosphorylation activity; when associated with D-205, D-377 and E-530." evidence="11">
    <original>T</original>
    <variation>E</variation>
    <location>
        <position position="386"/>
    </location>
</feature>
<feature type="mutagenesis site" description="Almost complete loss of enzyme activity." evidence="4">
    <original>P</original>
    <variation>R</variation>
    <location>
        <position position="391"/>
    </location>
</feature>
<feature type="mutagenesis site" description="Abolishes enzyme activity." evidence="4">
    <original>E</original>
    <variation>G</variation>
    <location>
        <position position="392"/>
    </location>
</feature>
<feature type="mutagenesis site" description="Abolishes enzyme activity." evidence="4">
    <original>G</original>
    <variation>E</variation>
    <location>
        <position position="415"/>
    </location>
</feature>
<feature type="mutagenesis site" description="Slight reduction in phosphorylation of ubiquitin." evidence="11">
    <original>E</original>
    <variation>A</variation>
    <location>
        <position position="420"/>
    </location>
</feature>
<feature type="mutagenesis site" description="Slight reduction in phosphorylation of ubiquitin." evidence="11">
    <original>N</original>
    <variation>A</variation>
    <location>
        <position position="426"/>
    </location>
</feature>
<feature type="mutagenesis site" description="Drastically reduces phosphorylation of ubiquitin." evidence="11">
    <original>Y</original>
    <variation>A</variation>
    <location>
        <position position="429"/>
    </location>
</feature>
<feature type="mutagenesis site" description="Almost complete loss of enzyme activity." evidence="4">
    <original>L</original>
    <variation>P</variation>
    <location>
        <position position="462"/>
    </location>
</feature>
<feature type="mutagenesis site" description="Phosphomimetic mutant which retains some residual ubiquitin phosphorylation activity; when associated with D-205, D-377 and E-386." evidence="11">
    <original>T</original>
    <variation>E</variation>
    <location>
        <position position="530"/>
    </location>
</feature>
<feature type="helix" evidence="22">
    <location>
        <begin position="122"/>
        <end position="154"/>
    </location>
</feature>
<feature type="helix" evidence="19">
    <location>
        <begin position="159"/>
        <end position="161"/>
    </location>
</feature>
<feature type="strand" evidence="23">
    <location>
        <begin position="162"/>
        <end position="164"/>
    </location>
</feature>
<feature type="strand" evidence="20">
    <location>
        <begin position="167"/>
        <end position="170"/>
    </location>
</feature>
<feature type="strand" evidence="20">
    <location>
        <begin position="172"/>
        <end position="179"/>
    </location>
</feature>
<feature type="strand" evidence="20">
    <location>
        <begin position="193"/>
        <end position="199"/>
    </location>
</feature>
<feature type="strand" evidence="20">
    <location>
        <begin position="203"/>
        <end position="206"/>
    </location>
</feature>
<feature type="helix" evidence="20">
    <location>
        <begin position="208"/>
        <end position="216"/>
    </location>
</feature>
<feature type="turn" evidence="20">
    <location>
        <begin position="217"/>
        <end position="220"/>
    </location>
</feature>
<feature type="strand" evidence="19">
    <location>
        <begin position="222"/>
        <end position="225"/>
    </location>
</feature>
<feature type="helix" evidence="19">
    <location>
        <begin position="232"/>
        <end position="240"/>
    </location>
</feature>
<feature type="strand" evidence="20">
    <location>
        <begin position="253"/>
        <end position="257"/>
    </location>
</feature>
<feature type="strand" evidence="20">
    <location>
        <begin position="289"/>
        <end position="295"/>
    </location>
</feature>
<feature type="strand" evidence="20">
    <location>
        <begin position="298"/>
        <end position="300"/>
    </location>
</feature>
<feature type="helix" evidence="20">
    <location>
        <begin position="301"/>
        <end position="304"/>
    </location>
</feature>
<feature type="helix" evidence="24">
    <location>
        <begin position="305"/>
        <end position="307"/>
    </location>
</feature>
<feature type="helix" evidence="20">
    <location>
        <begin position="311"/>
        <end position="330"/>
    </location>
</feature>
<feature type="strand" evidence="20">
    <location>
        <begin position="342"/>
        <end position="346"/>
    </location>
</feature>
<feature type="strand" evidence="20">
    <location>
        <begin position="354"/>
        <end position="357"/>
    </location>
</feature>
<feature type="helix" evidence="19">
    <location>
        <begin position="360"/>
        <end position="362"/>
    </location>
</feature>
<feature type="strand" evidence="21">
    <location>
        <begin position="364"/>
        <end position="366"/>
    </location>
</feature>
<feature type="turn" evidence="20">
    <location>
        <begin position="367"/>
        <end position="369"/>
    </location>
</feature>
<feature type="strand" evidence="20">
    <location>
        <begin position="372"/>
        <end position="374"/>
    </location>
</feature>
<feature type="strand" evidence="19">
    <location>
        <begin position="378"/>
        <end position="380"/>
    </location>
</feature>
<feature type="strand" evidence="22">
    <location>
        <begin position="386"/>
        <end position="388"/>
    </location>
</feature>
<feature type="helix" evidence="20">
    <location>
        <begin position="391"/>
        <end position="394"/>
    </location>
</feature>
<feature type="strand" evidence="19">
    <location>
        <begin position="399"/>
        <end position="401"/>
    </location>
</feature>
<feature type="strand" evidence="20">
    <location>
        <begin position="403"/>
        <end position="405"/>
    </location>
</feature>
<feature type="helix" evidence="20">
    <location>
        <begin position="409"/>
        <end position="421"/>
    </location>
</feature>
<feature type="strand" evidence="19">
    <location>
        <begin position="429"/>
        <end position="432"/>
    </location>
</feature>
<feature type="turn" evidence="20">
    <location>
        <begin position="436"/>
        <end position="438"/>
    </location>
</feature>
<feature type="helix" evidence="20">
    <location>
        <begin position="441"/>
        <end position="443"/>
    </location>
</feature>
<feature type="helix" evidence="20">
    <location>
        <begin position="453"/>
        <end position="462"/>
    </location>
</feature>
<feature type="helix" evidence="20">
    <location>
        <begin position="467"/>
        <end position="469"/>
    </location>
</feature>
<feature type="helix" evidence="20">
    <location>
        <begin position="473"/>
        <end position="485"/>
    </location>
</feature>
<feature type="helix" evidence="20">
    <location>
        <begin position="488"/>
        <end position="491"/>
    </location>
</feature>
<feature type="strand" evidence="21">
    <location>
        <begin position="492"/>
        <end position="495"/>
    </location>
</feature>
<feature type="helix" evidence="20">
    <location>
        <begin position="500"/>
        <end position="515"/>
    </location>
</feature>
<feature type="strand" evidence="22">
    <location>
        <begin position="519"/>
        <end position="522"/>
    </location>
</feature>
<feature type="helix" evidence="22">
    <location>
        <begin position="523"/>
        <end position="525"/>
    </location>
</feature>
<feature type="helix" evidence="22">
    <location>
        <begin position="533"/>
        <end position="535"/>
    </location>
</feature>
<feature type="helix" evidence="20">
    <location>
        <begin position="537"/>
        <end position="548"/>
    </location>
</feature>
<feature type="helix" evidence="20">
    <location>
        <begin position="552"/>
        <end position="564"/>
    </location>
</feature>
<organism evidence="16">
    <name type="scientific">Tribolium castaneum</name>
    <name type="common">Red flour beetle</name>
    <dbReference type="NCBI Taxonomy" id="7070"/>
    <lineage>
        <taxon>Eukaryota</taxon>
        <taxon>Metazoa</taxon>
        <taxon>Ecdysozoa</taxon>
        <taxon>Arthropoda</taxon>
        <taxon>Hexapoda</taxon>
        <taxon>Insecta</taxon>
        <taxon>Pterygota</taxon>
        <taxon>Neoptera</taxon>
        <taxon>Endopterygota</taxon>
        <taxon>Coleoptera</taxon>
        <taxon>Polyphaga</taxon>
        <taxon>Cucujiformia</taxon>
        <taxon>Tenebrionidae</taxon>
        <taxon>Tenebrionidae incertae sedis</taxon>
        <taxon>Tribolium</taxon>
    </lineage>
</organism>